<proteinExistence type="inferred from homology"/>
<comment type="function">
    <text evidence="1">Plays an essential role in the initiation and regulation of chromosomal replication. ATP-DnaA binds to the origin of replication (oriC) to initiate formation of the DNA replication initiation complex once per cell cycle. Binds the DnaA box (a 9 base pair repeat at the origin) and separates the double-stranded (ds)DNA. Forms a right-handed helical filament on oriC DNA; dsDNA binds to the exterior of the filament while single-stranded (ss)DNA is stabiized in the filament's interior. The ATP-DnaA-oriC complex binds and stabilizes one strand of the AT-rich DNA unwinding element (DUE), permitting loading of DNA polymerase. After initiation quickly degrades to an ADP-DnaA complex that is not apt for DNA replication. Binds acidic phospholipids.</text>
</comment>
<comment type="subunit">
    <text evidence="1">Oligomerizes as a right-handed, spiral filament on DNA at oriC.</text>
</comment>
<comment type="subcellular location">
    <subcellularLocation>
        <location evidence="1">Cytoplasm</location>
    </subcellularLocation>
</comment>
<comment type="domain">
    <text evidence="1">Domain I is involved in oligomerization and binding regulators, domain II is flexibile and of varying length in different bacteria, domain III forms the AAA+ region, while domain IV binds dsDNA.</text>
</comment>
<comment type="similarity">
    <text evidence="1">Belongs to the DnaA family.</text>
</comment>
<evidence type="ECO:0000255" key="1">
    <source>
        <dbReference type="HAMAP-Rule" id="MF_00377"/>
    </source>
</evidence>
<evidence type="ECO:0000256" key="2">
    <source>
        <dbReference type="SAM" id="MobiDB-lite"/>
    </source>
</evidence>
<dbReference type="EMBL" id="CP000576">
    <property type="protein sequence ID" value="ABO17214.1"/>
    <property type="molecule type" value="Genomic_DNA"/>
</dbReference>
<dbReference type="RefSeq" id="WP_011862581.1">
    <property type="nucleotide sequence ID" value="NC_009091.1"/>
</dbReference>
<dbReference type="SMR" id="A3PBT9"/>
<dbReference type="STRING" id="167546.P9301_05911"/>
<dbReference type="KEGG" id="pmg:P9301_05911"/>
<dbReference type="eggNOG" id="COG0593">
    <property type="taxonomic scope" value="Bacteria"/>
</dbReference>
<dbReference type="HOGENOM" id="CLU_026910_3_1_3"/>
<dbReference type="OrthoDB" id="9807019at2"/>
<dbReference type="Proteomes" id="UP000001430">
    <property type="component" value="Chromosome"/>
</dbReference>
<dbReference type="GO" id="GO:0005737">
    <property type="term" value="C:cytoplasm"/>
    <property type="evidence" value="ECO:0007669"/>
    <property type="project" value="UniProtKB-SubCell"/>
</dbReference>
<dbReference type="GO" id="GO:0005886">
    <property type="term" value="C:plasma membrane"/>
    <property type="evidence" value="ECO:0007669"/>
    <property type="project" value="TreeGrafter"/>
</dbReference>
<dbReference type="GO" id="GO:0005524">
    <property type="term" value="F:ATP binding"/>
    <property type="evidence" value="ECO:0007669"/>
    <property type="project" value="UniProtKB-UniRule"/>
</dbReference>
<dbReference type="GO" id="GO:0016887">
    <property type="term" value="F:ATP hydrolysis activity"/>
    <property type="evidence" value="ECO:0007669"/>
    <property type="project" value="InterPro"/>
</dbReference>
<dbReference type="GO" id="GO:0003688">
    <property type="term" value="F:DNA replication origin binding"/>
    <property type="evidence" value="ECO:0007669"/>
    <property type="project" value="UniProtKB-UniRule"/>
</dbReference>
<dbReference type="GO" id="GO:0008289">
    <property type="term" value="F:lipid binding"/>
    <property type="evidence" value="ECO:0007669"/>
    <property type="project" value="UniProtKB-KW"/>
</dbReference>
<dbReference type="GO" id="GO:0006270">
    <property type="term" value="P:DNA replication initiation"/>
    <property type="evidence" value="ECO:0007669"/>
    <property type="project" value="UniProtKB-UniRule"/>
</dbReference>
<dbReference type="GO" id="GO:0006275">
    <property type="term" value="P:regulation of DNA replication"/>
    <property type="evidence" value="ECO:0007669"/>
    <property type="project" value="UniProtKB-UniRule"/>
</dbReference>
<dbReference type="CDD" id="cd00009">
    <property type="entry name" value="AAA"/>
    <property type="match status" value="1"/>
</dbReference>
<dbReference type="CDD" id="cd06571">
    <property type="entry name" value="Bac_DnaA_C"/>
    <property type="match status" value="1"/>
</dbReference>
<dbReference type="FunFam" id="3.40.50.300:FF:000668">
    <property type="entry name" value="Chromosomal replication initiator protein DnaA"/>
    <property type="match status" value="1"/>
</dbReference>
<dbReference type="Gene3D" id="1.10.1750.10">
    <property type="match status" value="1"/>
</dbReference>
<dbReference type="Gene3D" id="1.10.8.60">
    <property type="match status" value="1"/>
</dbReference>
<dbReference type="Gene3D" id="3.30.300.180">
    <property type="match status" value="1"/>
</dbReference>
<dbReference type="Gene3D" id="3.40.50.300">
    <property type="entry name" value="P-loop containing nucleotide triphosphate hydrolases"/>
    <property type="match status" value="1"/>
</dbReference>
<dbReference type="HAMAP" id="MF_00377">
    <property type="entry name" value="DnaA_bact"/>
    <property type="match status" value="1"/>
</dbReference>
<dbReference type="InterPro" id="IPR003593">
    <property type="entry name" value="AAA+_ATPase"/>
</dbReference>
<dbReference type="InterPro" id="IPR001957">
    <property type="entry name" value="Chromosome_initiator_DnaA"/>
</dbReference>
<dbReference type="InterPro" id="IPR020591">
    <property type="entry name" value="Chromosome_initiator_DnaA-like"/>
</dbReference>
<dbReference type="InterPro" id="IPR018312">
    <property type="entry name" value="Chromosome_initiator_DnaA_CS"/>
</dbReference>
<dbReference type="InterPro" id="IPR013159">
    <property type="entry name" value="DnaA_C"/>
</dbReference>
<dbReference type="InterPro" id="IPR013317">
    <property type="entry name" value="DnaA_dom"/>
</dbReference>
<dbReference type="InterPro" id="IPR024633">
    <property type="entry name" value="DnaA_N_dom"/>
</dbReference>
<dbReference type="InterPro" id="IPR038454">
    <property type="entry name" value="DnaA_N_sf"/>
</dbReference>
<dbReference type="InterPro" id="IPR027417">
    <property type="entry name" value="P-loop_NTPase"/>
</dbReference>
<dbReference type="InterPro" id="IPR010921">
    <property type="entry name" value="Trp_repressor/repl_initiator"/>
</dbReference>
<dbReference type="NCBIfam" id="TIGR00362">
    <property type="entry name" value="DnaA"/>
    <property type="match status" value="1"/>
</dbReference>
<dbReference type="PANTHER" id="PTHR30050">
    <property type="entry name" value="CHROMOSOMAL REPLICATION INITIATOR PROTEIN DNAA"/>
    <property type="match status" value="1"/>
</dbReference>
<dbReference type="PANTHER" id="PTHR30050:SF2">
    <property type="entry name" value="CHROMOSOMAL REPLICATION INITIATOR PROTEIN DNAA"/>
    <property type="match status" value="1"/>
</dbReference>
<dbReference type="Pfam" id="PF00308">
    <property type="entry name" value="Bac_DnaA"/>
    <property type="match status" value="1"/>
</dbReference>
<dbReference type="Pfam" id="PF08299">
    <property type="entry name" value="Bac_DnaA_C"/>
    <property type="match status" value="1"/>
</dbReference>
<dbReference type="Pfam" id="PF11638">
    <property type="entry name" value="DnaA_N"/>
    <property type="match status" value="1"/>
</dbReference>
<dbReference type="PRINTS" id="PR00051">
    <property type="entry name" value="DNAA"/>
</dbReference>
<dbReference type="SMART" id="SM00382">
    <property type="entry name" value="AAA"/>
    <property type="match status" value="1"/>
</dbReference>
<dbReference type="SMART" id="SM00760">
    <property type="entry name" value="Bac_DnaA_C"/>
    <property type="match status" value="1"/>
</dbReference>
<dbReference type="SUPFAM" id="SSF52540">
    <property type="entry name" value="P-loop containing nucleoside triphosphate hydrolases"/>
    <property type="match status" value="1"/>
</dbReference>
<dbReference type="SUPFAM" id="SSF48295">
    <property type="entry name" value="TrpR-like"/>
    <property type="match status" value="1"/>
</dbReference>
<dbReference type="PROSITE" id="PS01008">
    <property type="entry name" value="DNAA"/>
    <property type="match status" value="1"/>
</dbReference>
<protein>
    <recommendedName>
        <fullName evidence="1">Chromosomal replication initiator protein DnaA</fullName>
    </recommendedName>
</protein>
<gene>
    <name evidence="1" type="primary">dnaA</name>
    <name type="ordered locus">P9301_05911</name>
</gene>
<reference key="1">
    <citation type="journal article" date="2007" name="PLoS Genet.">
        <title>Patterns and implications of gene gain and loss in the evolution of Prochlorococcus.</title>
        <authorList>
            <person name="Kettler G.C."/>
            <person name="Martiny A.C."/>
            <person name="Huang K."/>
            <person name="Zucker J."/>
            <person name="Coleman M.L."/>
            <person name="Rodrigue S."/>
            <person name="Chen F."/>
            <person name="Lapidus A."/>
            <person name="Ferriera S."/>
            <person name="Johnson J."/>
            <person name="Steglich C."/>
            <person name="Church G.M."/>
            <person name="Richardson P."/>
            <person name="Chisholm S.W."/>
        </authorList>
    </citation>
    <scope>NUCLEOTIDE SEQUENCE [LARGE SCALE GENOMIC DNA]</scope>
    <source>
        <strain>MIT 9301</strain>
    </source>
</reference>
<accession>A3PBT9</accession>
<name>DNAA_PROM0</name>
<feature type="chain" id="PRO_1000048685" description="Chromosomal replication initiator protein DnaA">
    <location>
        <begin position="1"/>
        <end position="464"/>
    </location>
</feature>
<feature type="region of interest" description="Domain I, interacts with DnaA modulators" evidence="1">
    <location>
        <begin position="1"/>
        <end position="79"/>
    </location>
</feature>
<feature type="region of interest" description="Domain II" evidence="1">
    <location>
        <begin position="79"/>
        <end position="123"/>
    </location>
</feature>
<feature type="region of interest" description="Disordered" evidence="2">
    <location>
        <begin position="100"/>
        <end position="120"/>
    </location>
</feature>
<feature type="region of interest" description="Domain III, AAA+ region" evidence="1">
    <location>
        <begin position="124"/>
        <end position="340"/>
    </location>
</feature>
<feature type="region of interest" description="Domain IV, binds dsDNA" evidence="1">
    <location>
        <begin position="341"/>
        <end position="464"/>
    </location>
</feature>
<feature type="compositionally biased region" description="Polar residues" evidence="2">
    <location>
        <begin position="105"/>
        <end position="120"/>
    </location>
</feature>
<feature type="binding site" evidence="1">
    <location>
        <position position="168"/>
    </location>
    <ligand>
        <name>ATP</name>
        <dbReference type="ChEBI" id="CHEBI:30616"/>
    </ligand>
</feature>
<feature type="binding site" evidence="1">
    <location>
        <position position="170"/>
    </location>
    <ligand>
        <name>ATP</name>
        <dbReference type="ChEBI" id="CHEBI:30616"/>
    </ligand>
</feature>
<feature type="binding site" evidence="1">
    <location>
        <position position="171"/>
    </location>
    <ligand>
        <name>ATP</name>
        <dbReference type="ChEBI" id="CHEBI:30616"/>
    </ligand>
</feature>
<feature type="binding site" evidence="1">
    <location>
        <position position="172"/>
    </location>
    <ligand>
        <name>ATP</name>
        <dbReference type="ChEBI" id="CHEBI:30616"/>
    </ligand>
</feature>
<sequence length="464" mass="52167">MQTINPIWAEVQQSLKKTLSKPSFETWIRPAKFNCFENGLLTLIAPNTFSSDWLRKNYCQTIEKAAKEICGHDVKVVFKSEKNISRDSTNKENLDDQIVNHKTKSFPNNSQEISSKNRSKNPNGLNLRYVFKRFVVGPNSRLAHAAALAVAESPGREFNPLFICGGVGLGKTHLMQAIGHYRVEIDPEAKVKYVSTETFTNDVISGIRRDGMTAIRDKYRNVDLILIDDIQFLEGKEYTQEEFFHTFNALHESGSQIVIASDRPPNQLSGIQERLISRFSMGMTADIQPPDLETRTAILQKKAEQESMSLPRDLIQFIAGRFTSNIRELEGAFTRAVAFASITGLPMTVQSIAPMLDPNSVGVVVSPKQVINKVSDFFKVSTDELISSSRRKPVSQARQIGMYLMRHGTDLSLPRIGDEFGGKDHTTVMYAIEQVEKKLSIDPNIASQVQKIRDLLQIDSRKNL</sequence>
<organism>
    <name type="scientific">Prochlorococcus marinus (strain MIT 9301)</name>
    <dbReference type="NCBI Taxonomy" id="167546"/>
    <lineage>
        <taxon>Bacteria</taxon>
        <taxon>Bacillati</taxon>
        <taxon>Cyanobacteriota</taxon>
        <taxon>Cyanophyceae</taxon>
        <taxon>Synechococcales</taxon>
        <taxon>Prochlorococcaceae</taxon>
        <taxon>Prochlorococcus</taxon>
    </lineage>
</organism>
<keyword id="KW-0067">ATP-binding</keyword>
<keyword id="KW-0963">Cytoplasm</keyword>
<keyword id="KW-0235">DNA replication</keyword>
<keyword id="KW-0238">DNA-binding</keyword>
<keyword id="KW-0446">Lipid-binding</keyword>
<keyword id="KW-0547">Nucleotide-binding</keyword>
<keyword id="KW-1185">Reference proteome</keyword>